<comment type="function">
    <text evidence="1">Master enzyme that delivers sulfur to a number of partners involved in Fe-S cluster assembly, tRNA modification or cofactor biosynthesis. Catalyzes the removal of elemental sulfur atoms from cysteine to produce alanine. Functions as a sulfur delivery protein for Fe-S cluster synthesis onto IscU, an Fe-S scaffold assembly protein, as well as other S acceptor proteins.</text>
</comment>
<comment type="catalytic activity">
    <reaction evidence="1">
        <text>(sulfur carrier)-H + L-cysteine = (sulfur carrier)-SH + L-alanine</text>
        <dbReference type="Rhea" id="RHEA:43892"/>
        <dbReference type="Rhea" id="RHEA-COMP:14737"/>
        <dbReference type="Rhea" id="RHEA-COMP:14739"/>
        <dbReference type="ChEBI" id="CHEBI:29917"/>
        <dbReference type="ChEBI" id="CHEBI:35235"/>
        <dbReference type="ChEBI" id="CHEBI:57972"/>
        <dbReference type="ChEBI" id="CHEBI:64428"/>
        <dbReference type="EC" id="2.8.1.7"/>
    </reaction>
</comment>
<comment type="cofactor">
    <cofactor evidence="1">
        <name>pyridoxal 5'-phosphate</name>
        <dbReference type="ChEBI" id="CHEBI:597326"/>
    </cofactor>
</comment>
<comment type="pathway">
    <text evidence="1">Cofactor biosynthesis; iron-sulfur cluster biosynthesis.</text>
</comment>
<comment type="subunit">
    <text evidence="1">Homodimer. Forms a heterotetramer with IscU, interacts with other sulfur acceptors.</text>
</comment>
<comment type="subcellular location">
    <subcellularLocation>
        <location evidence="1">Cytoplasm</location>
    </subcellularLocation>
</comment>
<comment type="similarity">
    <text evidence="1">Belongs to the class-V pyridoxal-phosphate-dependent aminotransferase family. NifS/IscS subfamily.</text>
</comment>
<proteinExistence type="inferred from homology"/>
<protein>
    <recommendedName>
        <fullName evidence="1">Cysteine desulfurase IscS</fullName>
        <ecNumber evidence="1">2.8.1.7</ecNumber>
    </recommendedName>
</protein>
<dbReference type="EC" id="2.8.1.7" evidence="1"/>
<dbReference type="EMBL" id="CP000251">
    <property type="protein sequence ID" value="ABC80368.1"/>
    <property type="molecule type" value="Genomic_DNA"/>
</dbReference>
<dbReference type="RefSeq" id="WP_011419651.1">
    <property type="nucleotide sequence ID" value="NC_007760.1"/>
</dbReference>
<dbReference type="SMR" id="Q2INI7"/>
<dbReference type="STRING" id="290397.Adeh_0592"/>
<dbReference type="KEGG" id="ade:Adeh_0592"/>
<dbReference type="eggNOG" id="COG1104">
    <property type="taxonomic scope" value="Bacteria"/>
</dbReference>
<dbReference type="HOGENOM" id="CLU_003433_0_2_7"/>
<dbReference type="OrthoDB" id="9808002at2"/>
<dbReference type="UniPathway" id="UPA00266"/>
<dbReference type="Proteomes" id="UP000001935">
    <property type="component" value="Chromosome"/>
</dbReference>
<dbReference type="GO" id="GO:1990221">
    <property type="term" value="C:L-cysteine desulfurase complex"/>
    <property type="evidence" value="ECO:0007669"/>
    <property type="project" value="UniProtKB-ARBA"/>
</dbReference>
<dbReference type="GO" id="GO:0051537">
    <property type="term" value="F:2 iron, 2 sulfur cluster binding"/>
    <property type="evidence" value="ECO:0007669"/>
    <property type="project" value="UniProtKB-UniRule"/>
</dbReference>
<dbReference type="GO" id="GO:0031071">
    <property type="term" value="F:cysteine desulfurase activity"/>
    <property type="evidence" value="ECO:0007669"/>
    <property type="project" value="UniProtKB-UniRule"/>
</dbReference>
<dbReference type="GO" id="GO:0046872">
    <property type="term" value="F:metal ion binding"/>
    <property type="evidence" value="ECO:0007669"/>
    <property type="project" value="UniProtKB-KW"/>
</dbReference>
<dbReference type="GO" id="GO:0030170">
    <property type="term" value="F:pyridoxal phosphate binding"/>
    <property type="evidence" value="ECO:0007669"/>
    <property type="project" value="UniProtKB-UniRule"/>
</dbReference>
<dbReference type="GO" id="GO:0044571">
    <property type="term" value="P:[2Fe-2S] cluster assembly"/>
    <property type="evidence" value="ECO:0007669"/>
    <property type="project" value="UniProtKB-UniRule"/>
</dbReference>
<dbReference type="FunFam" id="3.40.640.10:FF:000003">
    <property type="entry name" value="Cysteine desulfurase IscS"/>
    <property type="match status" value="1"/>
</dbReference>
<dbReference type="FunFam" id="3.90.1150.10:FF:000002">
    <property type="entry name" value="Cysteine desulfurase IscS"/>
    <property type="match status" value="1"/>
</dbReference>
<dbReference type="Gene3D" id="3.90.1150.10">
    <property type="entry name" value="Aspartate Aminotransferase, domain 1"/>
    <property type="match status" value="1"/>
</dbReference>
<dbReference type="Gene3D" id="3.40.640.10">
    <property type="entry name" value="Type I PLP-dependent aspartate aminotransferase-like (Major domain)"/>
    <property type="match status" value="1"/>
</dbReference>
<dbReference type="HAMAP" id="MF_00331">
    <property type="entry name" value="Cys_desulf_IscS"/>
    <property type="match status" value="1"/>
</dbReference>
<dbReference type="InterPro" id="IPR000192">
    <property type="entry name" value="Aminotrans_V_dom"/>
</dbReference>
<dbReference type="InterPro" id="IPR020578">
    <property type="entry name" value="Aminotrans_V_PyrdxlP_BS"/>
</dbReference>
<dbReference type="InterPro" id="IPR010240">
    <property type="entry name" value="Cys_deSase_IscS"/>
</dbReference>
<dbReference type="InterPro" id="IPR016454">
    <property type="entry name" value="Cysteine_dSase"/>
</dbReference>
<dbReference type="InterPro" id="IPR015424">
    <property type="entry name" value="PyrdxlP-dep_Trfase"/>
</dbReference>
<dbReference type="InterPro" id="IPR015421">
    <property type="entry name" value="PyrdxlP-dep_Trfase_major"/>
</dbReference>
<dbReference type="InterPro" id="IPR015422">
    <property type="entry name" value="PyrdxlP-dep_Trfase_small"/>
</dbReference>
<dbReference type="NCBIfam" id="TIGR02006">
    <property type="entry name" value="IscS"/>
    <property type="match status" value="1"/>
</dbReference>
<dbReference type="NCBIfam" id="NF002806">
    <property type="entry name" value="PRK02948.1"/>
    <property type="match status" value="1"/>
</dbReference>
<dbReference type="NCBIfam" id="NF010611">
    <property type="entry name" value="PRK14012.1"/>
    <property type="match status" value="1"/>
</dbReference>
<dbReference type="PANTHER" id="PTHR11601:SF34">
    <property type="entry name" value="CYSTEINE DESULFURASE"/>
    <property type="match status" value="1"/>
</dbReference>
<dbReference type="PANTHER" id="PTHR11601">
    <property type="entry name" value="CYSTEINE DESULFURYLASE FAMILY MEMBER"/>
    <property type="match status" value="1"/>
</dbReference>
<dbReference type="Pfam" id="PF00266">
    <property type="entry name" value="Aminotran_5"/>
    <property type="match status" value="1"/>
</dbReference>
<dbReference type="PIRSF" id="PIRSF005572">
    <property type="entry name" value="NifS"/>
    <property type="match status" value="1"/>
</dbReference>
<dbReference type="SUPFAM" id="SSF53383">
    <property type="entry name" value="PLP-dependent transferases"/>
    <property type="match status" value="1"/>
</dbReference>
<dbReference type="PROSITE" id="PS00595">
    <property type="entry name" value="AA_TRANSFER_CLASS_5"/>
    <property type="match status" value="1"/>
</dbReference>
<organism>
    <name type="scientific">Anaeromyxobacter dehalogenans (strain 2CP-C)</name>
    <dbReference type="NCBI Taxonomy" id="290397"/>
    <lineage>
        <taxon>Bacteria</taxon>
        <taxon>Pseudomonadati</taxon>
        <taxon>Myxococcota</taxon>
        <taxon>Myxococcia</taxon>
        <taxon>Myxococcales</taxon>
        <taxon>Cystobacterineae</taxon>
        <taxon>Anaeromyxobacteraceae</taxon>
        <taxon>Anaeromyxobacter</taxon>
    </lineage>
</organism>
<gene>
    <name evidence="1" type="primary">iscS</name>
    <name type="ordered locus">Adeh_0592</name>
</gene>
<keyword id="KW-0001">2Fe-2S</keyword>
<keyword id="KW-0963">Cytoplasm</keyword>
<keyword id="KW-0408">Iron</keyword>
<keyword id="KW-0411">Iron-sulfur</keyword>
<keyword id="KW-0479">Metal-binding</keyword>
<keyword id="KW-0663">Pyridoxal phosphate</keyword>
<keyword id="KW-1185">Reference proteome</keyword>
<keyword id="KW-0808">Transferase</keyword>
<evidence type="ECO:0000255" key="1">
    <source>
        <dbReference type="HAMAP-Rule" id="MF_00331"/>
    </source>
</evidence>
<reference key="1">
    <citation type="submission" date="2006-01" db="EMBL/GenBank/DDBJ databases">
        <title>Complete sequence of Anaeromyxobacter dehalogenans 2CP-C.</title>
        <authorList>
            <person name="Copeland A."/>
            <person name="Lucas S."/>
            <person name="Lapidus A."/>
            <person name="Barry K."/>
            <person name="Detter J.C."/>
            <person name="Glavina T."/>
            <person name="Hammon N."/>
            <person name="Israni S."/>
            <person name="Pitluck S."/>
            <person name="Brettin T."/>
            <person name="Bruce D."/>
            <person name="Han C."/>
            <person name="Tapia R."/>
            <person name="Gilna P."/>
            <person name="Kiss H."/>
            <person name="Schmutz J."/>
            <person name="Larimer F."/>
            <person name="Land M."/>
            <person name="Kyrpides N."/>
            <person name="Anderson I."/>
            <person name="Sanford R.A."/>
            <person name="Ritalahti K.M."/>
            <person name="Thomas H.S."/>
            <person name="Kirby J.R."/>
            <person name="Zhulin I.B."/>
            <person name="Loeffler F.E."/>
            <person name="Richardson P."/>
        </authorList>
    </citation>
    <scope>NUCLEOTIDE SEQUENCE [LARGE SCALE GENOMIC DNA]</scope>
    <source>
        <strain>2CP-C</strain>
    </source>
</reference>
<feature type="chain" id="PRO_1000019402" description="Cysteine desulfurase IscS">
    <location>
        <begin position="1"/>
        <end position="404"/>
    </location>
</feature>
<feature type="active site" description="Cysteine persulfide intermediate" evidence="1">
    <location>
        <position position="327"/>
    </location>
</feature>
<feature type="binding site" evidence="1">
    <location>
        <begin position="73"/>
        <end position="74"/>
    </location>
    <ligand>
        <name>pyridoxal 5'-phosphate</name>
        <dbReference type="ChEBI" id="CHEBI:597326"/>
    </ligand>
</feature>
<feature type="binding site" evidence="1">
    <location>
        <position position="153"/>
    </location>
    <ligand>
        <name>pyridoxal 5'-phosphate</name>
        <dbReference type="ChEBI" id="CHEBI:597326"/>
    </ligand>
</feature>
<feature type="binding site" evidence="1">
    <location>
        <position position="181"/>
    </location>
    <ligand>
        <name>pyridoxal 5'-phosphate</name>
        <dbReference type="ChEBI" id="CHEBI:597326"/>
    </ligand>
</feature>
<feature type="binding site" evidence="1">
    <location>
        <begin position="201"/>
        <end position="203"/>
    </location>
    <ligand>
        <name>pyridoxal 5'-phosphate</name>
        <dbReference type="ChEBI" id="CHEBI:597326"/>
    </ligand>
</feature>
<feature type="binding site" evidence="1">
    <location>
        <position position="241"/>
    </location>
    <ligand>
        <name>pyridoxal 5'-phosphate</name>
        <dbReference type="ChEBI" id="CHEBI:597326"/>
    </ligand>
</feature>
<feature type="binding site" description="via persulfide group" evidence="1">
    <location>
        <position position="327"/>
    </location>
    <ligand>
        <name>[2Fe-2S] cluster</name>
        <dbReference type="ChEBI" id="CHEBI:190135"/>
        <note>ligand shared with IscU</note>
    </ligand>
</feature>
<feature type="modified residue" description="N6-(pyridoxal phosphate)lysine" evidence="1">
    <location>
        <position position="204"/>
    </location>
</feature>
<sequence>MKIPIYMDYHATTPVDPRVLEAMLPYFTTEYGNAASKSHAFGWKAEEAVEAAREEVAKLIGASAKEIVWTSGATESDNLAVKGAAHFYQAKGKHLVTCKTEHKAVLDSMHALERQGFEVTFLEPERDGRLDPAKVKAALRPDTILVSVMHANNETGVVHPIAEIGRIAREAGVVFHCDAVQSIGKIPFDVEAMNVDLASISAHKMYGPKGVGALYVRRKPRVRLVAEMDGGGHERGFRSGTLNVPGIVGMGKAAELARLERDAEAVRVTALRERLRKGLEQELDLLTVNGSLEHRVPGNLNVSFAYVEGEALMMAVKDVAVSSGSACTSASLEPSYVLRAMGVSEDLAHSSIRFGLGRFSTEEEVDYAIRLFGEKVRKLREMSPLYEMVKDGVDLNQIEWANPH</sequence>
<name>ISCS_ANADE</name>
<accession>Q2INI7</accession>